<protein>
    <recommendedName>
        <fullName evidence="4">Pristinol synthase</fullName>
        <ecNumber evidence="3">4.2.3.182</ecNumber>
    </recommendedName>
    <alternativeName>
        <fullName evidence="4">Terpene synthase</fullName>
    </alternativeName>
    <alternativeName>
        <fullName evidence="4">Type I terpene cyclase</fullName>
    </alternativeName>
</protein>
<proteinExistence type="evidence at protein level"/>
<dbReference type="EC" id="4.2.3.182" evidence="3"/>
<dbReference type="EMBL" id="CM000950">
    <property type="protein sequence ID" value="EDY62784.1"/>
    <property type="molecule type" value="Genomic_DNA"/>
</dbReference>
<dbReference type="RefSeq" id="WP_005320742.1">
    <property type="nucleotide sequence ID" value="NZ_CM000950.1"/>
</dbReference>
<dbReference type="SMR" id="B5H7H3"/>
<dbReference type="GeneID" id="97232417"/>
<dbReference type="eggNOG" id="COG0664">
    <property type="taxonomic scope" value="Bacteria"/>
</dbReference>
<dbReference type="HOGENOM" id="CLU_042538_4_0_11"/>
<dbReference type="BRENDA" id="4.2.3.182">
    <property type="organism ID" value="12737"/>
</dbReference>
<dbReference type="UniPathway" id="UPA00213"/>
<dbReference type="Proteomes" id="UP000002805">
    <property type="component" value="Chromosome"/>
</dbReference>
<dbReference type="GO" id="GO:0046872">
    <property type="term" value="F:metal ion binding"/>
    <property type="evidence" value="ECO:0007669"/>
    <property type="project" value="UniProtKB-KW"/>
</dbReference>
<dbReference type="GO" id="GO:0010333">
    <property type="term" value="F:terpene synthase activity"/>
    <property type="evidence" value="ECO:0007669"/>
    <property type="project" value="InterPro"/>
</dbReference>
<dbReference type="GO" id="GO:0016114">
    <property type="term" value="P:terpenoid biosynthetic process"/>
    <property type="evidence" value="ECO:0007669"/>
    <property type="project" value="UniProtKB-UniPathway"/>
</dbReference>
<dbReference type="Gene3D" id="1.10.600.10">
    <property type="entry name" value="Farnesyl Diphosphate Synthase"/>
    <property type="match status" value="1"/>
</dbReference>
<dbReference type="InterPro" id="IPR048128">
    <property type="entry name" value="Isoafr/prist_syn"/>
</dbReference>
<dbReference type="InterPro" id="IPR008949">
    <property type="entry name" value="Isoprenoid_synthase_dom_sf"/>
</dbReference>
<dbReference type="InterPro" id="IPR034686">
    <property type="entry name" value="Terpene_cyclase-like_2"/>
</dbReference>
<dbReference type="NCBIfam" id="NF041624">
    <property type="entry name" value="isoafr_syn"/>
    <property type="match status" value="1"/>
</dbReference>
<dbReference type="PANTHER" id="PTHR35201:SF4">
    <property type="entry name" value="BETA-PINACENE SYNTHASE-RELATED"/>
    <property type="match status" value="1"/>
</dbReference>
<dbReference type="PANTHER" id="PTHR35201">
    <property type="entry name" value="TERPENE SYNTHASE"/>
    <property type="match status" value="1"/>
</dbReference>
<dbReference type="Pfam" id="PF19086">
    <property type="entry name" value="Terpene_syn_C_2"/>
    <property type="match status" value="1"/>
</dbReference>
<dbReference type="SFLD" id="SFLDS00005">
    <property type="entry name" value="Isoprenoid_Synthase_Type_I"/>
    <property type="match status" value="1"/>
</dbReference>
<dbReference type="SFLD" id="SFLDG01020">
    <property type="entry name" value="Terpene_Cyclase_Like_2"/>
    <property type="match status" value="1"/>
</dbReference>
<dbReference type="SUPFAM" id="SSF48576">
    <property type="entry name" value="Terpenoid synthases"/>
    <property type="match status" value="1"/>
</dbReference>
<accession>B5H7H3</accession>
<feature type="chain" id="PRO_0000443323" description="Pristinol synthase">
    <location>
        <begin position="1"/>
        <end position="372"/>
    </location>
</feature>
<feature type="region of interest" description="Disordered" evidence="2">
    <location>
        <begin position="1"/>
        <end position="23"/>
    </location>
</feature>
<feature type="region of interest" description="Disordered" evidence="2">
    <location>
        <begin position="349"/>
        <end position="372"/>
    </location>
</feature>
<feature type="short sequence motif" description="DDXXD motif" evidence="6">
    <location>
        <begin position="100"/>
        <end position="104"/>
    </location>
</feature>
<feature type="compositionally biased region" description="Basic and acidic residues" evidence="2">
    <location>
        <begin position="1"/>
        <end position="12"/>
    </location>
</feature>
<feature type="binding site" evidence="1">
    <location>
        <position position="100"/>
    </location>
    <ligand>
        <name>Mg(2+)</name>
        <dbReference type="ChEBI" id="CHEBI:18420"/>
        <label>1</label>
    </ligand>
</feature>
<feature type="binding site" evidence="1">
    <location>
        <position position="104"/>
    </location>
    <ligand>
        <name>Mg(2+)</name>
        <dbReference type="ChEBI" id="CHEBI:18420"/>
        <label>1</label>
    </ligand>
</feature>
<feature type="binding site" evidence="1">
    <location>
        <position position="104"/>
    </location>
    <ligand>
        <name>Mg(2+)</name>
        <dbReference type="ChEBI" id="CHEBI:18420"/>
        <label>2</label>
    </ligand>
</feature>
<feature type="binding site" evidence="1">
    <location>
        <position position="197"/>
    </location>
    <ligand>
        <name>substrate</name>
    </ligand>
</feature>
<feature type="binding site" evidence="1">
    <location>
        <position position="243"/>
    </location>
    <ligand>
        <name>Mg(2+)</name>
        <dbReference type="ChEBI" id="CHEBI:18420"/>
        <label>3</label>
    </ligand>
</feature>
<feature type="binding site" evidence="1">
    <location>
        <position position="247"/>
    </location>
    <ligand>
        <name>Mg(2+)</name>
        <dbReference type="ChEBI" id="CHEBI:18420"/>
        <label>3</label>
    </ligand>
</feature>
<feature type="binding site" evidence="1">
    <location>
        <position position="250"/>
    </location>
    <ligand>
        <name>substrate</name>
    </ligand>
</feature>
<feature type="binding site" evidence="1">
    <location>
        <position position="251"/>
    </location>
    <ligand>
        <name>Mg(2+)</name>
        <dbReference type="ChEBI" id="CHEBI:18420"/>
        <label>3</label>
    </ligand>
</feature>
<feature type="binding site" evidence="1">
    <location>
        <begin position="337"/>
        <end position="338"/>
    </location>
    <ligand>
        <name>substrate</name>
    </ligand>
</feature>
<reference key="1">
    <citation type="submission" date="2008-02" db="EMBL/GenBank/DDBJ databases">
        <authorList>
            <consortium name="The Broad Institute Genome Sequencing Platform"/>
            <person name="Fischbach M."/>
            <person name="Ward D."/>
            <person name="Young S."/>
            <person name="Jaffe D."/>
            <person name="Gnerre S."/>
            <person name="Berlin A."/>
            <person name="Heiman D."/>
            <person name="Hepburn T."/>
            <person name="Sykes S."/>
            <person name="Alvarado L."/>
            <person name="Kodira C.D."/>
            <person name="Straight P."/>
            <person name="Clardy J."/>
            <person name="Hung D."/>
            <person name="Kolter R."/>
            <person name="Mekalanos J."/>
            <person name="Walker S."/>
            <person name="Walsh C.T."/>
            <person name="Lander E."/>
            <person name="Galagan J."/>
            <person name="Nusbaum C."/>
            <person name="Birren B."/>
        </authorList>
    </citation>
    <scope>NUCLEOTIDE SEQUENCE [LARGE SCALE GENOMIC DNA]</scope>
    <source>
        <strain evidence="8">ATCC 25486 / DSM 40338 / CBS 914.69 / JCM 4507 / KCC S-0507 / NBRC 13074 / NRRL 2958 / 5647</strain>
    </source>
</reference>
<reference key="2">
    <citation type="submission" date="2009-10" db="EMBL/GenBank/DDBJ databases">
        <title>The genome sequence of Streptomyces pristinaespiralis strain ATCC 25486.</title>
        <authorList>
            <consortium name="The Broad Institute Genome Sequencing Platform"/>
            <consortium name="Broad Institute Microbial Sequencing Center"/>
            <person name="Fischbach M."/>
            <person name="Godfrey P."/>
            <person name="Ward D."/>
            <person name="Young S."/>
            <person name="Zeng Q."/>
            <person name="Koehrsen M."/>
            <person name="Alvarado L."/>
            <person name="Berlin A.M."/>
            <person name="Bochicchio J."/>
            <person name="Borenstein D."/>
            <person name="Chapman S.B."/>
            <person name="Chen Z."/>
            <person name="Engels R."/>
            <person name="Freedman E."/>
            <person name="Gellesch M."/>
            <person name="Goldberg J."/>
            <person name="Griggs A."/>
            <person name="Gujja S."/>
            <person name="Heilman E.R."/>
            <person name="Heiman D.I."/>
            <person name="Hepburn T.A."/>
            <person name="Howarth C."/>
            <person name="Jen D."/>
            <person name="Larson L."/>
            <person name="Lewis B."/>
            <person name="Mehta T."/>
            <person name="Park D."/>
            <person name="Pearson M."/>
            <person name="Richards J."/>
            <person name="Roberts A."/>
            <person name="Saif S."/>
            <person name="Shea T.D."/>
            <person name="Shenoy N."/>
            <person name="Sisk P."/>
            <person name="Stolte C."/>
            <person name="Sykes S.N."/>
            <person name="Thomson T."/>
            <person name="Walk T."/>
            <person name="White J."/>
            <person name="Yandava C."/>
            <person name="Straight P."/>
            <person name="Clardy J."/>
            <person name="Hung D."/>
            <person name="Kolter R."/>
            <person name="Mekalanos J."/>
            <person name="Walker S."/>
            <person name="Walsh C.T."/>
            <person name="Wieland-Brown L.C."/>
            <person name="Haas B."/>
            <person name="Nusbaum C."/>
            <person name="Birren B."/>
        </authorList>
    </citation>
    <scope>NUCLEOTIDE SEQUENCE [LARGE SCALE GENOMIC DNA]</scope>
    <source>
        <strain evidence="7 8">ATCC 25486 / DSM 40338 / CBS 914.69 / JCM 4507 / KCC S-0507 / NBRC 13074 / NRRL 2958 / 5647</strain>
    </source>
</reference>
<reference key="3">
    <citation type="journal article" date="2016" name="Angew. Chem. Int. Ed.">
        <title>Pristinol, a sesquiterpene alcohol with an unusual skeleton from Streptomyces pristinaespiralis.</title>
        <authorList>
            <person name="Klapschinski T.A."/>
            <person name="Rabe P."/>
            <person name="Dickschat J.S."/>
        </authorList>
    </citation>
    <scope>FUNCTION</scope>
    <scope>CATALYTIC ACTIVITY</scope>
    <scope>DOMAIN</scope>
    <scope>SUBSTRATE SPECIFICITY</scope>
</reference>
<organism>
    <name type="scientific">Streptomyces pristinaespiralis (strain ATCC 25486 / DSM 40338 / CBS 914.69 / JCM 4507 / KCC S-0507 / NBRC 13074 / NRRL 2958 / 5647)</name>
    <dbReference type="NCBI Taxonomy" id="457429"/>
    <lineage>
        <taxon>Bacteria</taxon>
        <taxon>Bacillati</taxon>
        <taxon>Actinomycetota</taxon>
        <taxon>Actinomycetes</taxon>
        <taxon>Kitasatosporales</taxon>
        <taxon>Streptomycetaceae</taxon>
        <taxon>Streptomyces</taxon>
    </lineage>
</organism>
<name>PRISS_STRE2</name>
<gene>
    <name evidence="7" type="ORF">SSDG_01120</name>
</gene>
<comment type="function">
    <text evidence="3">Catalyzes the conversion of (2E,6E)-farnesyl diphosphate (FPP) to yield a new 5-8 bicyclic (pristinane) sesquiterpenol (+)-(2S,3R,9R)-pristinol via a 1,11-cyclization, which requires the abstraction of the pyrophosphate from FPP to yield the humulyl cation. The only accepted substrate is farnesyl diphosphate (FPP).</text>
</comment>
<comment type="catalytic activity">
    <reaction evidence="3">
        <text>(2E,6E)-farnesyl diphosphate + H2O = (+)-(2S,3R,9R)-pristinol + diphosphate</text>
        <dbReference type="Rhea" id="RHEA:54372"/>
        <dbReference type="ChEBI" id="CHEBI:15377"/>
        <dbReference type="ChEBI" id="CHEBI:33019"/>
        <dbReference type="ChEBI" id="CHEBI:138165"/>
        <dbReference type="ChEBI" id="CHEBI:175763"/>
        <dbReference type="EC" id="4.2.3.182"/>
    </reaction>
</comment>
<comment type="cofactor">
    <cofactor evidence="1">
        <name>Mg(2+)</name>
        <dbReference type="ChEBI" id="CHEBI:18420"/>
    </cofactor>
    <text evidence="1">Binds 3 Mg(2+) ions per subunit.</text>
</comment>
<comment type="pathway">
    <text evidence="5">Secondary metabolite biosynthesis; terpenoid biosynthesis.</text>
</comment>
<comment type="domain">
    <text evidence="6">The Asp-Asp-Xaa-Xaa-Asp (DDXXD) motif is important for the catalytic activity, presumably through binding to Mg(2+).</text>
</comment>
<comment type="similarity">
    <text evidence="5">Belongs to the terpene synthase family.</text>
</comment>
<sequence length="372" mass="41393">MAHETTSGRRLPDPTSPSDPTRRTAAIRIPFPARLNPHAERARQHTLQWVQETGLLTGDEATAEYDTLRLERLMAYFYPDASAGDLELAADFNAWFFIFDDQFDGGLGTRPHEIRGVVDALVGTMTTDGAPRPADVRDTPLVRAFRDIWLRSTAGAPYAWRLRFRDHWQAYLAAHVGEAHHRNADRLPSLEQFLEVRRHSIGVQPCLDFTERCGGYALPDELYRSFPLREMREITGDVVIFVNDIVSLVKELAAGDINNSVVIEREHKGCTLEESVEHITALANARTARFARLAASLPGTLADLGVPAPSREHVSHYVDGMRHVMAGNLSWSLATSRYDETGIAAVSGGRRRPWDGLTTATGTASPRHPRRA</sequence>
<evidence type="ECO:0000250" key="1">
    <source>
        <dbReference type="UniProtKB" id="B5HDJ6"/>
    </source>
</evidence>
<evidence type="ECO:0000256" key="2">
    <source>
        <dbReference type="SAM" id="MobiDB-lite"/>
    </source>
</evidence>
<evidence type="ECO:0000269" key="3">
    <source>
    </source>
</evidence>
<evidence type="ECO:0000303" key="4">
    <source>
    </source>
</evidence>
<evidence type="ECO:0000305" key="5"/>
<evidence type="ECO:0000305" key="6">
    <source>
    </source>
</evidence>
<evidence type="ECO:0000312" key="7">
    <source>
        <dbReference type="EMBL" id="EDY62784.1"/>
    </source>
</evidence>
<evidence type="ECO:0000312" key="8">
    <source>
        <dbReference type="Proteomes" id="UP000002805"/>
    </source>
</evidence>
<keyword id="KW-0456">Lyase</keyword>
<keyword id="KW-0460">Magnesium</keyword>
<keyword id="KW-0479">Metal-binding</keyword>
<keyword id="KW-1185">Reference proteome</keyword>